<accession>Q3ATL3</accession>
<protein>
    <recommendedName>
        <fullName evidence="1">ATP-dependent Clp protease proteolytic subunit</fullName>
        <ecNumber evidence="1">3.4.21.92</ecNumber>
    </recommendedName>
    <alternativeName>
        <fullName evidence="1">Endopeptidase Clp</fullName>
    </alternativeName>
</protein>
<reference key="1">
    <citation type="submission" date="2005-08" db="EMBL/GenBank/DDBJ databases">
        <title>Complete sequence of Chlorobium chlorochromatii CaD3.</title>
        <authorList>
            <consortium name="US DOE Joint Genome Institute"/>
            <person name="Copeland A."/>
            <person name="Lucas S."/>
            <person name="Lapidus A."/>
            <person name="Barry K."/>
            <person name="Detter J.C."/>
            <person name="Glavina T."/>
            <person name="Hammon N."/>
            <person name="Israni S."/>
            <person name="Pitluck S."/>
            <person name="Bryant D."/>
            <person name="Schmutz J."/>
            <person name="Larimer F."/>
            <person name="Land M."/>
            <person name="Kyrpides N."/>
            <person name="Ivanova N."/>
            <person name="Richardson P."/>
        </authorList>
    </citation>
    <scope>NUCLEOTIDE SEQUENCE [LARGE SCALE GENOMIC DNA]</scope>
    <source>
        <strain>CaD3</strain>
    </source>
</reference>
<comment type="function">
    <text evidence="1">Cleaves peptides in various proteins in a process that requires ATP hydrolysis. Has a chymotrypsin-like activity. Plays a major role in the degradation of misfolded proteins.</text>
</comment>
<comment type="catalytic activity">
    <reaction evidence="1">
        <text>Hydrolysis of proteins to small peptides in the presence of ATP and magnesium. alpha-casein is the usual test substrate. In the absence of ATP, only oligopeptides shorter than five residues are hydrolyzed (such as succinyl-Leu-Tyr-|-NHMec, and Leu-Tyr-Leu-|-Tyr-Trp, in which cleavage of the -Tyr-|-Leu- and -Tyr-|-Trp bonds also occurs).</text>
        <dbReference type="EC" id="3.4.21.92"/>
    </reaction>
</comment>
<comment type="subunit">
    <text evidence="1">Fourteen ClpP subunits assemble into 2 heptameric rings which stack back to back to give a disk-like structure with a central cavity, resembling the structure of eukaryotic proteasomes.</text>
</comment>
<comment type="subcellular location">
    <subcellularLocation>
        <location evidence="1">Cytoplasm</location>
    </subcellularLocation>
</comment>
<comment type="similarity">
    <text evidence="1">Belongs to the peptidase S14 family.</text>
</comment>
<proteinExistence type="inferred from homology"/>
<sequence>MANINFGFEHHAKKLYSGAIEQGISNSLVPMVIETSGRGERAFDIFSRLLRERIIFLGTGIDEHVAGLIMAQLIFLESEDPERDIYIYINSPGGSVSAGLGIYDTMQYIRPEISTVCVGMAASMGAFLLASGNKGKRASLPHSRIMIHQPSGGAQGQETDIVIQAREIEKIRRLLEELLAKHTGQPVEKVREDSERDRWMNPQEALEYGLIDAIFEKRPTPEKKD</sequence>
<organism>
    <name type="scientific">Chlorobium chlorochromatii (strain CaD3)</name>
    <dbReference type="NCBI Taxonomy" id="340177"/>
    <lineage>
        <taxon>Bacteria</taxon>
        <taxon>Pseudomonadati</taxon>
        <taxon>Chlorobiota</taxon>
        <taxon>Chlorobiia</taxon>
        <taxon>Chlorobiales</taxon>
        <taxon>Chlorobiaceae</taxon>
        <taxon>Chlorobium/Pelodictyon group</taxon>
        <taxon>Chlorobium</taxon>
    </lineage>
</organism>
<dbReference type="EC" id="3.4.21.92" evidence="1"/>
<dbReference type="EMBL" id="CP000108">
    <property type="protein sequence ID" value="ABB27662.1"/>
    <property type="molecule type" value="Genomic_DNA"/>
</dbReference>
<dbReference type="SMR" id="Q3ATL3"/>
<dbReference type="STRING" id="340177.Cag_0389"/>
<dbReference type="MEROPS" id="S14.001"/>
<dbReference type="KEGG" id="cch:Cag_0389"/>
<dbReference type="eggNOG" id="COG0740">
    <property type="taxonomic scope" value="Bacteria"/>
</dbReference>
<dbReference type="HOGENOM" id="CLU_058707_3_2_10"/>
<dbReference type="OrthoDB" id="9802800at2"/>
<dbReference type="GO" id="GO:0005737">
    <property type="term" value="C:cytoplasm"/>
    <property type="evidence" value="ECO:0007669"/>
    <property type="project" value="UniProtKB-SubCell"/>
</dbReference>
<dbReference type="GO" id="GO:0009368">
    <property type="term" value="C:endopeptidase Clp complex"/>
    <property type="evidence" value="ECO:0007669"/>
    <property type="project" value="TreeGrafter"/>
</dbReference>
<dbReference type="GO" id="GO:0004176">
    <property type="term" value="F:ATP-dependent peptidase activity"/>
    <property type="evidence" value="ECO:0007669"/>
    <property type="project" value="InterPro"/>
</dbReference>
<dbReference type="GO" id="GO:0051117">
    <property type="term" value="F:ATPase binding"/>
    <property type="evidence" value="ECO:0007669"/>
    <property type="project" value="TreeGrafter"/>
</dbReference>
<dbReference type="GO" id="GO:0004252">
    <property type="term" value="F:serine-type endopeptidase activity"/>
    <property type="evidence" value="ECO:0007669"/>
    <property type="project" value="UniProtKB-UniRule"/>
</dbReference>
<dbReference type="GO" id="GO:0006515">
    <property type="term" value="P:protein quality control for misfolded or incompletely synthesized proteins"/>
    <property type="evidence" value="ECO:0007669"/>
    <property type="project" value="TreeGrafter"/>
</dbReference>
<dbReference type="CDD" id="cd07017">
    <property type="entry name" value="S14_ClpP_2"/>
    <property type="match status" value="1"/>
</dbReference>
<dbReference type="FunFam" id="3.90.226.10:FF:000001">
    <property type="entry name" value="ATP-dependent Clp protease proteolytic subunit"/>
    <property type="match status" value="1"/>
</dbReference>
<dbReference type="Gene3D" id="3.90.226.10">
    <property type="entry name" value="2-enoyl-CoA Hydratase, Chain A, domain 1"/>
    <property type="match status" value="1"/>
</dbReference>
<dbReference type="HAMAP" id="MF_00444">
    <property type="entry name" value="ClpP"/>
    <property type="match status" value="1"/>
</dbReference>
<dbReference type="InterPro" id="IPR001907">
    <property type="entry name" value="ClpP"/>
</dbReference>
<dbReference type="InterPro" id="IPR029045">
    <property type="entry name" value="ClpP/crotonase-like_dom_sf"/>
</dbReference>
<dbReference type="InterPro" id="IPR023562">
    <property type="entry name" value="ClpP/TepA"/>
</dbReference>
<dbReference type="InterPro" id="IPR033135">
    <property type="entry name" value="ClpP_His_AS"/>
</dbReference>
<dbReference type="InterPro" id="IPR018215">
    <property type="entry name" value="ClpP_Ser_AS"/>
</dbReference>
<dbReference type="NCBIfam" id="TIGR00493">
    <property type="entry name" value="clpP"/>
    <property type="match status" value="1"/>
</dbReference>
<dbReference type="NCBIfam" id="NF001368">
    <property type="entry name" value="PRK00277.1"/>
    <property type="match status" value="1"/>
</dbReference>
<dbReference type="NCBIfam" id="NF009205">
    <property type="entry name" value="PRK12553.1"/>
    <property type="match status" value="1"/>
</dbReference>
<dbReference type="PANTHER" id="PTHR10381">
    <property type="entry name" value="ATP-DEPENDENT CLP PROTEASE PROTEOLYTIC SUBUNIT"/>
    <property type="match status" value="1"/>
</dbReference>
<dbReference type="PANTHER" id="PTHR10381:SF70">
    <property type="entry name" value="ATP-DEPENDENT CLP PROTEASE PROTEOLYTIC SUBUNIT"/>
    <property type="match status" value="1"/>
</dbReference>
<dbReference type="Pfam" id="PF00574">
    <property type="entry name" value="CLP_protease"/>
    <property type="match status" value="1"/>
</dbReference>
<dbReference type="PRINTS" id="PR00127">
    <property type="entry name" value="CLPPROTEASEP"/>
</dbReference>
<dbReference type="SUPFAM" id="SSF52096">
    <property type="entry name" value="ClpP/crotonase"/>
    <property type="match status" value="1"/>
</dbReference>
<dbReference type="PROSITE" id="PS00382">
    <property type="entry name" value="CLP_PROTEASE_HIS"/>
    <property type="match status" value="1"/>
</dbReference>
<dbReference type="PROSITE" id="PS00381">
    <property type="entry name" value="CLP_PROTEASE_SER"/>
    <property type="match status" value="1"/>
</dbReference>
<evidence type="ECO:0000255" key="1">
    <source>
        <dbReference type="HAMAP-Rule" id="MF_00444"/>
    </source>
</evidence>
<name>CLPP_CHLCH</name>
<feature type="chain" id="PRO_0000226439" description="ATP-dependent Clp protease proteolytic subunit">
    <location>
        <begin position="1"/>
        <end position="225"/>
    </location>
</feature>
<feature type="active site" description="Nucleophile" evidence="1">
    <location>
        <position position="123"/>
    </location>
</feature>
<feature type="active site" evidence="1">
    <location>
        <position position="148"/>
    </location>
</feature>
<keyword id="KW-0963">Cytoplasm</keyword>
<keyword id="KW-0378">Hydrolase</keyword>
<keyword id="KW-0645">Protease</keyword>
<keyword id="KW-0720">Serine protease</keyword>
<gene>
    <name evidence="1" type="primary">clpP</name>
    <name type="ordered locus">Cag_0389</name>
</gene>